<proteinExistence type="inferred from homology"/>
<dbReference type="EMBL" id="AY261363">
    <property type="status" value="NOT_ANNOTATED_CDS"/>
    <property type="molecule type" value="Genomic_DNA"/>
</dbReference>
<dbReference type="Proteomes" id="UP000000859">
    <property type="component" value="Segment"/>
</dbReference>
<sequence length="79" mass="9275">MNKTIEYQKEFLKENNQLLSIPVKKNILKEILQNDEQDTIITNCITKEVSINLDLIKNPKVLYSIYIMVVEYLKSMNIA</sequence>
<comment type="similarity">
    <text evidence="1">Belongs to the asfivirus D79L family.</text>
</comment>
<organism>
    <name type="scientific">African swine fever virus (isolate Tick/South Africa/Pretoriuskop Pr4/1996)</name>
    <name type="common">ASFV</name>
    <dbReference type="NCBI Taxonomy" id="561443"/>
    <lineage>
        <taxon>Viruses</taxon>
        <taxon>Varidnaviria</taxon>
        <taxon>Bamfordvirae</taxon>
        <taxon>Nucleocytoviricota</taxon>
        <taxon>Pokkesviricetes</taxon>
        <taxon>Asfuvirales</taxon>
        <taxon>Asfarviridae</taxon>
        <taxon>Asfivirus</taxon>
        <taxon>African swine fever virus</taxon>
    </lineage>
</organism>
<gene>
    <name type="ordered locus">Pret-116</name>
</gene>
<protein>
    <recommendedName>
        <fullName>Uncharacterized protein D79L</fullName>
        <shortName>pD79L</shortName>
    </recommendedName>
</protein>
<organismHost>
    <name type="scientific">Ornithodoros</name>
    <name type="common">relapsing fever ticks</name>
    <dbReference type="NCBI Taxonomy" id="6937"/>
</organismHost>
<organismHost>
    <name type="scientific">Phacochoerus aethiopicus</name>
    <name type="common">Warthog</name>
    <dbReference type="NCBI Taxonomy" id="85517"/>
</organismHost>
<organismHost>
    <name type="scientific">Phacochoerus africanus</name>
    <name type="common">Warthog</name>
    <dbReference type="NCBI Taxonomy" id="41426"/>
</organismHost>
<organismHost>
    <name type="scientific">Potamochoerus larvatus</name>
    <name type="common">Bushpig</name>
    <dbReference type="NCBI Taxonomy" id="273792"/>
</organismHost>
<organismHost>
    <name type="scientific">Sus scrofa</name>
    <name type="common">Pig</name>
    <dbReference type="NCBI Taxonomy" id="9823"/>
</organismHost>
<feature type="chain" id="PRO_0000373732" description="Uncharacterized protein D79L">
    <location>
        <begin position="1"/>
        <end position="79"/>
    </location>
</feature>
<accession>P0CAK4</accession>
<evidence type="ECO:0000305" key="1"/>
<name>VF79_ASFP4</name>
<reference key="1">
    <citation type="submission" date="2003-03" db="EMBL/GenBank/DDBJ databases">
        <title>African swine fever virus genomes.</title>
        <authorList>
            <person name="Kutish G.F."/>
            <person name="Rock D.L."/>
        </authorList>
    </citation>
    <scope>NUCLEOTIDE SEQUENCE [GENOMIC DNA]</scope>
</reference>